<comment type="function">
    <text evidence="1">Auxiliary protein of the large-conductance, voltage and calcium-activated potassium channel (BK alpha). Modulates gating properties by producing a marked shift in the BK channel's voltage dependence of activation in the hyperpolarizing direction, and in the absence of calcium (By similarity).</text>
</comment>
<comment type="subunit">
    <text evidence="1">Interacts with KCNMA1.</text>
</comment>
<comment type="subcellular location">
    <subcellularLocation>
        <location evidence="1">Cell membrane</location>
        <topology evidence="1">Single-pass membrane protein</topology>
    </subcellularLocation>
</comment>
<comment type="domain">
    <text evidence="1">The transmembrane domain is necessary for interaction with KCNMA1.</text>
</comment>
<evidence type="ECO:0000250" key="1"/>
<evidence type="ECO:0000255" key="2"/>
<proteinExistence type="evidence at transcript level"/>
<keyword id="KW-1003">Cell membrane</keyword>
<keyword id="KW-1015">Disulfide bond</keyword>
<keyword id="KW-0407">Ion channel</keyword>
<keyword id="KW-0406">Ion transport</keyword>
<keyword id="KW-0433">Leucine-rich repeat</keyword>
<keyword id="KW-0472">Membrane</keyword>
<keyword id="KW-1185">Reference proteome</keyword>
<keyword id="KW-0677">Repeat</keyword>
<keyword id="KW-0732">Signal</keyword>
<keyword id="KW-0812">Transmembrane</keyword>
<keyword id="KW-1133">Transmembrane helix</keyword>
<keyword id="KW-0813">Transport</keyword>
<protein>
    <recommendedName>
        <fullName>Leucine-rich repeat-containing protein 55</fullName>
    </recommendedName>
    <alternativeName>
        <fullName>BK channel auxiliary gamma subunit LRRC55</fullName>
    </alternativeName>
</protein>
<name>LRC55_MOUSE</name>
<accession>Q3UY51</accession>
<dbReference type="EMBL" id="AK134968">
    <property type="protein sequence ID" value="BAE22362.1"/>
    <property type="molecule type" value="mRNA"/>
</dbReference>
<dbReference type="CCDS" id="CCDS38167.2"/>
<dbReference type="RefSeq" id="NP_001028518.2">
    <property type="nucleotide sequence ID" value="NM_001033346.5"/>
</dbReference>
<dbReference type="RefSeq" id="XP_006499530.1">
    <property type="nucleotide sequence ID" value="XM_006499467.3"/>
</dbReference>
<dbReference type="RefSeq" id="XP_006499531.1">
    <property type="nucleotide sequence ID" value="XM_006499468.3"/>
</dbReference>
<dbReference type="RefSeq" id="XP_006499532.1">
    <property type="nucleotide sequence ID" value="XM_006499469.2"/>
</dbReference>
<dbReference type="SMR" id="Q3UY51"/>
<dbReference type="FunCoup" id="Q3UY51">
    <property type="interactions" value="15"/>
</dbReference>
<dbReference type="STRING" id="10090.ENSMUSP00000107228"/>
<dbReference type="GlyConnect" id="2471">
    <property type="glycosylation" value="4 N-Linked glycans (1 site)"/>
</dbReference>
<dbReference type="GlyCosmos" id="Q3UY51">
    <property type="glycosylation" value="1 site, 4 glycans"/>
</dbReference>
<dbReference type="GlyGen" id="Q3UY51">
    <property type="glycosylation" value="3 sites, 7 N-linked glycans (3 sites)"/>
</dbReference>
<dbReference type="iPTMnet" id="Q3UY51"/>
<dbReference type="PaxDb" id="10090-ENSMUSP00000107228"/>
<dbReference type="ProteomicsDB" id="252509"/>
<dbReference type="Antibodypedia" id="2684">
    <property type="antibodies" value="10 antibodies from 7 providers"/>
</dbReference>
<dbReference type="Ensembl" id="ENSMUST00000234267.3">
    <property type="protein sequence ID" value="ENSMUSP00000157165.3"/>
    <property type="gene ID" value="ENSMUSG00000075224.11"/>
</dbReference>
<dbReference type="Ensembl" id="ENSMUST00000234905.3">
    <property type="protein sequence ID" value="ENSMUSP00000157170.3"/>
    <property type="gene ID" value="ENSMUSG00000075224.11"/>
</dbReference>
<dbReference type="GeneID" id="241528"/>
<dbReference type="KEGG" id="mmu:241528"/>
<dbReference type="UCSC" id="uc008kkc.1">
    <property type="organism name" value="mouse"/>
</dbReference>
<dbReference type="AGR" id="MGI:2685197"/>
<dbReference type="CTD" id="219527"/>
<dbReference type="MGI" id="MGI:2685197">
    <property type="gene designation" value="Lrrc55"/>
</dbReference>
<dbReference type="VEuPathDB" id="HostDB:ENSMUSG00000075224"/>
<dbReference type="eggNOG" id="KOG0619">
    <property type="taxonomic scope" value="Eukaryota"/>
</dbReference>
<dbReference type="GeneTree" id="ENSGT00940000161412"/>
<dbReference type="HOGENOM" id="CLU_000288_18_10_1"/>
<dbReference type="InParanoid" id="Q3UY51"/>
<dbReference type="OrthoDB" id="1687175at2759"/>
<dbReference type="PhylomeDB" id="Q3UY51"/>
<dbReference type="TreeFam" id="TF334689"/>
<dbReference type="BioGRID-ORCS" id="241528">
    <property type="hits" value="2 hits in 76 CRISPR screens"/>
</dbReference>
<dbReference type="ChiTaRS" id="Lrrc55">
    <property type="organism name" value="mouse"/>
</dbReference>
<dbReference type="PRO" id="PR:Q3UY51"/>
<dbReference type="Proteomes" id="UP000000589">
    <property type="component" value="Chromosome 2"/>
</dbReference>
<dbReference type="RNAct" id="Q3UY51">
    <property type="molecule type" value="protein"/>
</dbReference>
<dbReference type="Bgee" id="ENSMUSG00000075224">
    <property type="expression patterns" value="Expressed in olfactory bulb and 50 other cell types or tissues"/>
</dbReference>
<dbReference type="ExpressionAtlas" id="Q3UY51">
    <property type="expression patterns" value="baseline and differential"/>
</dbReference>
<dbReference type="GO" id="GO:0005886">
    <property type="term" value="C:plasma membrane"/>
    <property type="evidence" value="ECO:0007669"/>
    <property type="project" value="UniProtKB-SubCell"/>
</dbReference>
<dbReference type="GO" id="GO:0034220">
    <property type="term" value="P:monoatomic ion transmembrane transport"/>
    <property type="evidence" value="ECO:0007669"/>
    <property type="project" value="UniProtKB-KW"/>
</dbReference>
<dbReference type="FunFam" id="3.80.10.10:FF:000245">
    <property type="entry name" value="Leucine rich repeat containing 55"/>
    <property type="match status" value="1"/>
</dbReference>
<dbReference type="FunFam" id="3.80.10.10:FF:000309">
    <property type="entry name" value="Leucine-rich repeat-containing protein 55"/>
    <property type="match status" value="1"/>
</dbReference>
<dbReference type="Gene3D" id="3.80.10.10">
    <property type="entry name" value="Ribonuclease Inhibitor"/>
    <property type="match status" value="2"/>
</dbReference>
<dbReference type="InterPro" id="IPR000483">
    <property type="entry name" value="Cys-rich_flank_reg_C"/>
</dbReference>
<dbReference type="InterPro" id="IPR051432">
    <property type="entry name" value="KCNMA1_auxiliary"/>
</dbReference>
<dbReference type="InterPro" id="IPR001611">
    <property type="entry name" value="Leu-rich_rpt"/>
</dbReference>
<dbReference type="InterPro" id="IPR003591">
    <property type="entry name" value="Leu-rich_rpt_typical-subtyp"/>
</dbReference>
<dbReference type="InterPro" id="IPR032675">
    <property type="entry name" value="LRR_dom_sf"/>
</dbReference>
<dbReference type="InterPro" id="IPR000372">
    <property type="entry name" value="LRRNT"/>
</dbReference>
<dbReference type="PANTHER" id="PTHR46473">
    <property type="entry name" value="GH08155P"/>
    <property type="match status" value="1"/>
</dbReference>
<dbReference type="PANTHER" id="PTHR46473:SF5">
    <property type="entry name" value="LEUCINE-RICH REPEAT-CONTAINING PROTEIN 55"/>
    <property type="match status" value="1"/>
</dbReference>
<dbReference type="Pfam" id="PF13855">
    <property type="entry name" value="LRR_8"/>
    <property type="match status" value="1"/>
</dbReference>
<dbReference type="SMART" id="SM00369">
    <property type="entry name" value="LRR_TYP"/>
    <property type="match status" value="4"/>
</dbReference>
<dbReference type="SMART" id="SM00082">
    <property type="entry name" value="LRRCT"/>
    <property type="match status" value="1"/>
</dbReference>
<dbReference type="SMART" id="SM00013">
    <property type="entry name" value="LRRNT"/>
    <property type="match status" value="1"/>
</dbReference>
<dbReference type="SUPFAM" id="SSF52058">
    <property type="entry name" value="L domain-like"/>
    <property type="match status" value="1"/>
</dbReference>
<dbReference type="PROSITE" id="PS51450">
    <property type="entry name" value="LRR"/>
    <property type="match status" value="5"/>
</dbReference>
<sequence>MGDTWAQLPWPGPPHSALLLVFFLLAAGVMHSDAGTSCPVLCTCRNQVVDCSNQRLFSVPPDLPMDTRNLSLAHNRIAAVPPGYLTCYMELRVLDLRNNSLMELPPGLFLHAKRLAHLDLSYNNLSHVPADMFREAHGLVHIDLSHNPWLRRVHPQAFQGLVHLRDLDLSYGGLAFLSLEALEGLPGLVTLQIGGNPWVCGCTMEPLLKWLRNRIQRCTADSQLAECRGPPEVEGAPLFSLTEESFKACHLTLTLDDYLFIAFVGFVVSIASVATNFLLGITANCCHRWSKANEEEEI</sequence>
<organism>
    <name type="scientific">Mus musculus</name>
    <name type="common">Mouse</name>
    <dbReference type="NCBI Taxonomy" id="10090"/>
    <lineage>
        <taxon>Eukaryota</taxon>
        <taxon>Metazoa</taxon>
        <taxon>Chordata</taxon>
        <taxon>Craniata</taxon>
        <taxon>Vertebrata</taxon>
        <taxon>Euteleostomi</taxon>
        <taxon>Mammalia</taxon>
        <taxon>Eutheria</taxon>
        <taxon>Euarchontoglires</taxon>
        <taxon>Glires</taxon>
        <taxon>Rodentia</taxon>
        <taxon>Myomorpha</taxon>
        <taxon>Muroidea</taxon>
        <taxon>Muridae</taxon>
        <taxon>Murinae</taxon>
        <taxon>Mus</taxon>
        <taxon>Mus</taxon>
    </lineage>
</organism>
<reference key="1">
    <citation type="journal article" date="2005" name="Science">
        <title>The transcriptional landscape of the mammalian genome.</title>
        <authorList>
            <person name="Carninci P."/>
            <person name="Kasukawa T."/>
            <person name="Katayama S."/>
            <person name="Gough J."/>
            <person name="Frith M.C."/>
            <person name="Maeda N."/>
            <person name="Oyama R."/>
            <person name="Ravasi T."/>
            <person name="Lenhard B."/>
            <person name="Wells C."/>
            <person name="Kodzius R."/>
            <person name="Shimokawa K."/>
            <person name="Bajic V.B."/>
            <person name="Brenner S.E."/>
            <person name="Batalov S."/>
            <person name="Forrest A.R."/>
            <person name="Zavolan M."/>
            <person name="Davis M.J."/>
            <person name="Wilming L.G."/>
            <person name="Aidinis V."/>
            <person name="Allen J.E."/>
            <person name="Ambesi-Impiombato A."/>
            <person name="Apweiler R."/>
            <person name="Aturaliya R.N."/>
            <person name="Bailey T.L."/>
            <person name="Bansal M."/>
            <person name="Baxter L."/>
            <person name="Beisel K.W."/>
            <person name="Bersano T."/>
            <person name="Bono H."/>
            <person name="Chalk A.M."/>
            <person name="Chiu K.P."/>
            <person name="Choudhary V."/>
            <person name="Christoffels A."/>
            <person name="Clutterbuck D.R."/>
            <person name="Crowe M.L."/>
            <person name="Dalla E."/>
            <person name="Dalrymple B.P."/>
            <person name="de Bono B."/>
            <person name="Della Gatta G."/>
            <person name="di Bernardo D."/>
            <person name="Down T."/>
            <person name="Engstrom P."/>
            <person name="Fagiolini M."/>
            <person name="Faulkner G."/>
            <person name="Fletcher C.F."/>
            <person name="Fukushima T."/>
            <person name="Furuno M."/>
            <person name="Futaki S."/>
            <person name="Gariboldi M."/>
            <person name="Georgii-Hemming P."/>
            <person name="Gingeras T.R."/>
            <person name="Gojobori T."/>
            <person name="Green R.E."/>
            <person name="Gustincich S."/>
            <person name="Harbers M."/>
            <person name="Hayashi Y."/>
            <person name="Hensch T.K."/>
            <person name="Hirokawa N."/>
            <person name="Hill D."/>
            <person name="Huminiecki L."/>
            <person name="Iacono M."/>
            <person name="Ikeo K."/>
            <person name="Iwama A."/>
            <person name="Ishikawa T."/>
            <person name="Jakt M."/>
            <person name="Kanapin A."/>
            <person name="Katoh M."/>
            <person name="Kawasawa Y."/>
            <person name="Kelso J."/>
            <person name="Kitamura H."/>
            <person name="Kitano H."/>
            <person name="Kollias G."/>
            <person name="Krishnan S.P."/>
            <person name="Kruger A."/>
            <person name="Kummerfeld S.K."/>
            <person name="Kurochkin I.V."/>
            <person name="Lareau L.F."/>
            <person name="Lazarevic D."/>
            <person name="Lipovich L."/>
            <person name="Liu J."/>
            <person name="Liuni S."/>
            <person name="McWilliam S."/>
            <person name="Madan Babu M."/>
            <person name="Madera M."/>
            <person name="Marchionni L."/>
            <person name="Matsuda H."/>
            <person name="Matsuzawa S."/>
            <person name="Miki H."/>
            <person name="Mignone F."/>
            <person name="Miyake S."/>
            <person name="Morris K."/>
            <person name="Mottagui-Tabar S."/>
            <person name="Mulder N."/>
            <person name="Nakano N."/>
            <person name="Nakauchi H."/>
            <person name="Ng P."/>
            <person name="Nilsson R."/>
            <person name="Nishiguchi S."/>
            <person name="Nishikawa S."/>
            <person name="Nori F."/>
            <person name="Ohara O."/>
            <person name="Okazaki Y."/>
            <person name="Orlando V."/>
            <person name="Pang K.C."/>
            <person name="Pavan W.J."/>
            <person name="Pavesi G."/>
            <person name="Pesole G."/>
            <person name="Petrovsky N."/>
            <person name="Piazza S."/>
            <person name="Reed J."/>
            <person name="Reid J.F."/>
            <person name="Ring B.Z."/>
            <person name="Ringwald M."/>
            <person name="Rost B."/>
            <person name="Ruan Y."/>
            <person name="Salzberg S.L."/>
            <person name="Sandelin A."/>
            <person name="Schneider C."/>
            <person name="Schoenbach C."/>
            <person name="Sekiguchi K."/>
            <person name="Semple C.A."/>
            <person name="Seno S."/>
            <person name="Sessa L."/>
            <person name="Sheng Y."/>
            <person name="Shibata Y."/>
            <person name="Shimada H."/>
            <person name="Shimada K."/>
            <person name="Silva D."/>
            <person name="Sinclair B."/>
            <person name="Sperling S."/>
            <person name="Stupka E."/>
            <person name="Sugiura K."/>
            <person name="Sultana R."/>
            <person name="Takenaka Y."/>
            <person name="Taki K."/>
            <person name="Tammoja K."/>
            <person name="Tan S.L."/>
            <person name="Tang S."/>
            <person name="Taylor M.S."/>
            <person name="Tegner J."/>
            <person name="Teichmann S.A."/>
            <person name="Ueda H.R."/>
            <person name="van Nimwegen E."/>
            <person name="Verardo R."/>
            <person name="Wei C.L."/>
            <person name="Yagi K."/>
            <person name="Yamanishi H."/>
            <person name="Zabarovsky E."/>
            <person name="Zhu S."/>
            <person name="Zimmer A."/>
            <person name="Hide W."/>
            <person name="Bult C."/>
            <person name="Grimmond S.M."/>
            <person name="Teasdale R.D."/>
            <person name="Liu E.T."/>
            <person name="Brusic V."/>
            <person name="Quackenbush J."/>
            <person name="Wahlestedt C."/>
            <person name="Mattick J.S."/>
            <person name="Hume D.A."/>
            <person name="Kai C."/>
            <person name="Sasaki D."/>
            <person name="Tomaru Y."/>
            <person name="Fukuda S."/>
            <person name="Kanamori-Katayama M."/>
            <person name="Suzuki M."/>
            <person name="Aoki J."/>
            <person name="Arakawa T."/>
            <person name="Iida J."/>
            <person name="Imamura K."/>
            <person name="Itoh M."/>
            <person name="Kato T."/>
            <person name="Kawaji H."/>
            <person name="Kawagashira N."/>
            <person name="Kawashima T."/>
            <person name="Kojima M."/>
            <person name="Kondo S."/>
            <person name="Konno H."/>
            <person name="Nakano K."/>
            <person name="Ninomiya N."/>
            <person name="Nishio T."/>
            <person name="Okada M."/>
            <person name="Plessy C."/>
            <person name="Shibata K."/>
            <person name="Shiraki T."/>
            <person name="Suzuki S."/>
            <person name="Tagami M."/>
            <person name="Waki K."/>
            <person name="Watahiki A."/>
            <person name="Okamura-Oho Y."/>
            <person name="Suzuki H."/>
            <person name="Kawai J."/>
            <person name="Hayashizaki Y."/>
        </authorList>
    </citation>
    <scope>NUCLEOTIDE SEQUENCE [LARGE SCALE MRNA]</scope>
    <source>
        <strain>C57BL/6J</strain>
        <tissue>Olfactory bulb</tissue>
    </source>
</reference>
<feature type="signal peptide" evidence="1">
    <location>
        <begin position="1"/>
        <end position="34"/>
    </location>
</feature>
<feature type="chain" id="PRO_0000232914" description="Leucine-rich repeat-containing protein 55">
    <location>
        <begin position="35"/>
        <end position="298"/>
    </location>
</feature>
<feature type="transmembrane region" description="Helical" evidence="2">
    <location>
        <begin position="259"/>
        <end position="279"/>
    </location>
</feature>
<feature type="domain" description="LRRNT">
    <location>
        <begin position="35"/>
        <end position="65"/>
    </location>
</feature>
<feature type="repeat" description="LRR 1">
    <location>
        <begin position="66"/>
        <end position="87"/>
    </location>
</feature>
<feature type="repeat" description="LRR 2">
    <location>
        <begin position="90"/>
        <end position="111"/>
    </location>
</feature>
<feature type="repeat" description="LRR 3">
    <location>
        <begin position="114"/>
        <end position="135"/>
    </location>
</feature>
<feature type="repeat" description="LRR 4">
    <location>
        <begin position="138"/>
        <end position="160"/>
    </location>
</feature>
<feature type="repeat" description="LRR 5">
    <location>
        <begin position="163"/>
        <end position="186"/>
    </location>
</feature>
<feature type="domain" description="LRRCT">
    <location>
        <begin position="196"/>
        <end position="251"/>
    </location>
</feature>
<feature type="disulfide bond" evidence="2">
    <location>
        <begin position="38"/>
        <end position="44"/>
    </location>
</feature>
<feature type="disulfide bond" evidence="2">
    <location>
        <begin position="42"/>
        <end position="51"/>
    </location>
</feature>
<feature type="disulfide bond" evidence="2">
    <location>
        <begin position="200"/>
        <end position="227"/>
    </location>
</feature>
<feature type="disulfide bond" evidence="2">
    <location>
        <begin position="202"/>
        <end position="249"/>
    </location>
</feature>
<gene>
    <name type="primary">Lrrc55</name>
    <name type="synonym">Gm351</name>
</gene>